<comment type="function">
    <text evidence="5">Catalyzes the stereospecific oxidation of D-lactate to pyruvate.</text>
</comment>
<comment type="catalytic activity">
    <reaction evidence="5">
        <text>(R)-lactate + 2 Fe(III)-[cytochrome c] = 2 Fe(II)-[cytochrome c] + pyruvate + 2 H(+)</text>
        <dbReference type="Rhea" id="RHEA:13521"/>
        <dbReference type="Rhea" id="RHEA-COMP:10350"/>
        <dbReference type="Rhea" id="RHEA-COMP:14399"/>
        <dbReference type="ChEBI" id="CHEBI:15361"/>
        <dbReference type="ChEBI" id="CHEBI:15378"/>
        <dbReference type="ChEBI" id="CHEBI:16004"/>
        <dbReference type="ChEBI" id="CHEBI:29033"/>
        <dbReference type="ChEBI" id="CHEBI:29034"/>
        <dbReference type="EC" id="1.1.2.4"/>
    </reaction>
</comment>
<comment type="cofactor">
    <cofactor>
        <name>FAD</name>
        <dbReference type="ChEBI" id="CHEBI:57692"/>
    </cofactor>
    <text evidence="1">Binds 2 FAD.</text>
</comment>
<comment type="subcellular location">
    <subcellularLocation>
        <location evidence="3">Mitochondrion inner membrane</location>
    </subcellularLocation>
</comment>
<comment type="induction">
    <text>By D-lactate. Induced during respiratory adaptation.</text>
</comment>
<comment type="miscellaneous">
    <text evidence="4">Present with 10800 molecules/cell in log phase SD medium.</text>
</comment>
<comment type="similarity">
    <text evidence="7">Belongs to the FAD-binding oxidoreductase/transferase type 4 family.</text>
</comment>
<sequence>MLWKRTCTRLIKPIAQPRGRLVRRSCYRYASTGTGSTDSSSQWLKYSVIASSATLFGYLFAKNLYSRETKEDLIEKLEMVKKIDPVNSTLKLSSLDSPDYLHDPVKIDKVVEDLKQVLGNKPENYSDAKSDLDAHSDTYFNTHHPSPEQRPRIILFPHTTEEVSKILKICHDNNMPVVPFSGGTSLEGHFLPTRIGDTITVDLSKFMNNVVKFDKLDLDITVQAGLPWEDLNDYLSDHGLMFGCDPGPGAQIGGCIANSCSGTNAYRYGTMKENIINMTIVLPDGTIVKTKKRPRKSSAGYNLNGLFVGSEGTLGIVTEATVKCHVKPKAETVAVVSFDTIKDAAACASNLTQSGIHLNAMELLDENMMKLINASESTDRCDWVEKPTMFFKIGGRSPNIVNALVDEVKAVAQLNHCNSFQFAKDDDEKLELWEARKVALWSVLDADKSKDKSAKIWTTDVAVPVSQFDKVIHETKKDMQASKLINAIVGHAGDGNFHAFIVYRTPEEHETCSQLVDRMVKRALNAEGTCTGEHGVGIGKREYLLEELGEAPVDLMRKIKLAIDPKRIMNPDKIFKTDPNEPANDYR</sequence>
<organism>
    <name type="scientific">Saccharomyces cerevisiae (strain ATCC 204508 / S288c)</name>
    <name type="common">Baker's yeast</name>
    <dbReference type="NCBI Taxonomy" id="559292"/>
    <lineage>
        <taxon>Eukaryota</taxon>
        <taxon>Fungi</taxon>
        <taxon>Dikarya</taxon>
        <taxon>Ascomycota</taxon>
        <taxon>Saccharomycotina</taxon>
        <taxon>Saccharomycetes</taxon>
        <taxon>Saccharomycetales</taxon>
        <taxon>Saccharomycetaceae</taxon>
        <taxon>Saccharomyces</taxon>
    </lineage>
</organism>
<reference key="1">
    <citation type="journal article" date="1993" name="Mol. Gen. Genet.">
        <title>Isolation of the DLD gene of Saccharomyces cerevisiae encoding the mitochondrial enzyme D-lactate ferricytochrome c oxidoreductase.</title>
        <authorList>
            <person name="Lodi T."/>
            <person name="Ferrero I."/>
        </authorList>
    </citation>
    <scope>NUCLEOTIDE SEQUENCE [GENOMIC DNA]</scope>
    <scope>FUNCTION</scope>
    <scope>CATALYTIC ACTIVITY</scope>
    <source>
        <strain>ATCC 204508 / S288c</strain>
    </source>
</reference>
<reference key="2">
    <citation type="journal article" date="1997" name="Nature">
        <title>The nucleotide sequence of Saccharomyces cerevisiae chromosome IV.</title>
        <authorList>
            <person name="Jacq C."/>
            <person name="Alt-Moerbe J."/>
            <person name="Andre B."/>
            <person name="Arnold W."/>
            <person name="Bahr A."/>
            <person name="Ballesta J.P.G."/>
            <person name="Bargues M."/>
            <person name="Baron L."/>
            <person name="Becker A."/>
            <person name="Biteau N."/>
            <person name="Bloecker H."/>
            <person name="Blugeon C."/>
            <person name="Boskovic J."/>
            <person name="Brandt P."/>
            <person name="Brueckner M."/>
            <person name="Buitrago M.J."/>
            <person name="Coster F."/>
            <person name="Delaveau T."/>
            <person name="del Rey F."/>
            <person name="Dujon B."/>
            <person name="Eide L.G."/>
            <person name="Garcia-Cantalejo J.M."/>
            <person name="Goffeau A."/>
            <person name="Gomez-Peris A."/>
            <person name="Granotier C."/>
            <person name="Hanemann V."/>
            <person name="Hankeln T."/>
            <person name="Hoheisel J.D."/>
            <person name="Jaeger W."/>
            <person name="Jimenez A."/>
            <person name="Jonniaux J.-L."/>
            <person name="Kraemer C."/>
            <person name="Kuester H."/>
            <person name="Laamanen P."/>
            <person name="Legros Y."/>
            <person name="Louis E.J."/>
            <person name="Moeller-Rieker S."/>
            <person name="Monnet A."/>
            <person name="Moro M."/>
            <person name="Mueller-Auer S."/>
            <person name="Nussbaumer B."/>
            <person name="Paricio N."/>
            <person name="Paulin L."/>
            <person name="Perea J."/>
            <person name="Perez-Alonso M."/>
            <person name="Perez-Ortin J.E."/>
            <person name="Pohl T.M."/>
            <person name="Prydz H."/>
            <person name="Purnelle B."/>
            <person name="Rasmussen S.W."/>
            <person name="Remacha M.A."/>
            <person name="Revuelta J.L."/>
            <person name="Rieger M."/>
            <person name="Salom D."/>
            <person name="Saluz H.P."/>
            <person name="Saiz J.E."/>
            <person name="Saren A.-M."/>
            <person name="Schaefer M."/>
            <person name="Scharfe M."/>
            <person name="Schmidt E.R."/>
            <person name="Schneider C."/>
            <person name="Scholler P."/>
            <person name="Schwarz S."/>
            <person name="Soler-Mira A."/>
            <person name="Urrestarazu L.A."/>
            <person name="Verhasselt P."/>
            <person name="Vissers S."/>
            <person name="Voet M."/>
            <person name="Volckaert G."/>
            <person name="Wagner G."/>
            <person name="Wambutt R."/>
            <person name="Wedler E."/>
            <person name="Wedler H."/>
            <person name="Woelfl S."/>
            <person name="Harris D.E."/>
            <person name="Bowman S."/>
            <person name="Brown D."/>
            <person name="Churcher C.M."/>
            <person name="Connor R."/>
            <person name="Dedman K."/>
            <person name="Gentles S."/>
            <person name="Hamlin N."/>
            <person name="Hunt S."/>
            <person name="Jones L."/>
            <person name="McDonald S."/>
            <person name="Murphy L.D."/>
            <person name="Niblett D."/>
            <person name="Odell C."/>
            <person name="Oliver K."/>
            <person name="Rajandream M.A."/>
            <person name="Richards C."/>
            <person name="Shore L."/>
            <person name="Walsh S.V."/>
            <person name="Barrell B.G."/>
            <person name="Dietrich F.S."/>
            <person name="Mulligan J.T."/>
            <person name="Allen E."/>
            <person name="Araujo R."/>
            <person name="Aviles E."/>
            <person name="Berno A."/>
            <person name="Carpenter J."/>
            <person name="Chen E."/>
            <person name="Cherry J.M."/>
            <person name="Chung E."/>
            <person name="Duncan M."/>
            <person name="Hunicke-Smith S."/>
            <person name="Hyman R.W."/>
            <person name="Komp C."/>
            <person name="Lashkari D."/>
            <person name="Lew H."/>
            <person name="Lin D."/>
            <person name="Mosedale D."/>
            <person name="Nakahara K."/>
            <person name="Namath A."/>
            <person name="Oefner P."/>
            <person name="Oh C."/>
            <person name="Petel F.X."/>
            <person name="Roberts D."/>
            <person name="Schramm S."/>
            <person name="Schroeder M."/>
            <person name="Shogren T."/>
            <person name="Shroff N."/>
            <person name="Winant A."/>
            <person name="Yelton M.A."/>
            <person name="Botstein D."/>
            <person name="Davis R.W."/>
            <person name="Johnston M."/>
            <person name="Andrews S."/>
            <person name="Brinkman R."/>
            <person name="Cooper J."/>
            <person name="Ding H."/>
            <person name="Du Z."/>
            <person name="Favello A."/>
            <person name="Fulton L."/>
            <person name="Gattung S."/>
            <person name="Greco T."/>
            <person name="Hallsworth K."/>
            <person name="Hawkins J."/>
            <person name="Hillier L.W."/>
            <person name="Jier M."/>
            <person name="Johnson D."/>
            <person name="Johnston L."/>
            <person name="Kirsten J."/>
            <person name="Kucaba T."/>
            <person name="Langston Y."/>
            <person name="Latreille P."/>
            <person name="Le T."/>
            <person name="Mardis E."/>
            <person name="Menezes S."/>
            <person name="Miller N."/>
            <person name="Nhan M."/>
            <person name="Pauley A."/>
            <person name="Peluso D."/>
            <person name="Rifkin L."/>
            <person name="Riles L."/>
            <person name="Taich A."/>
            <person name="Trevaskis E."/>
            <person name="Vignati D."/>
            <person name="Wilcox L."/>
            <person name="Wohldman P."/>
            <person name="Vaudin M."/>
            <person name="Wilson R."/>
            <person name="Waterston R."/>
            <person name="Albermann K."/>
            <person name="Hani J."/>
            <person name="Heumann K."/>
            <person name="Kleine K."/>
            <person name="Mewes H.-W."/>
            <person name="Zollner A."/>
            <person name="Zaccaria P."/>
        </authorList>
    </citation>
    <scope>NUCLEOTIDE SEQUENCE [LARGE SCALE GENOMIC DNA]</scope>
    <source>
        <strain>ATCC 204508 / S288c</strain>
    </source>
</reference>
<reference key="3">
    <citation type="journal article" date="2014" name="G3 (Bethesda)">
        <title>The reference genome sequence of Saccharomyces cerevisiae: Then and now.</title>
        <authorList>
            <person name="Engel S.R."/>
            <person name="Dietrich F.S."/>
            <person name="Fisk D.G."/>
            <person name="Binkley G."/>
            <person name="Balakrishnan R."/>
            <person name="Costanzo M.C."/>
            <person name="Dwight S.S."/>
            <person name="Hitz B.C."/>
            <person name="Karra K."/>
            <person name="Nash R.S."/>
            <person name="Weng S."/>
            <person name="Wong E.D."/>
            <person name="Lloyd P."/>
            <person name="Skrzypek M.S."/>
            <person name="Miyasato S.R."/>
            <person name="Simison M."/>
            <person name="Cherry J.M."/>
        </authorList>
    </citation>
    <scope>GENOME REANNOTATION</scope>
    <source>
        <strain>ATCC 204508 / S288c</strain>
    </source>
</reference>
<reference key="4">
    <citation type="journal article" date="2001" name="Biochemistry">
        <title>Yeast mitochondrial dehydrogenases are associated in a supramolecular complex.</title>
        <authorList>
            <person name="Grandier-Vazeille X."/>
            <person name="Bathany K."/>
            <person name="Chaignepain S."/>
            <person name="Camougrand N."/>
            <person name="Manon S."/>
            <person name="Schmitter J.-M."/>
        </authorList>
    </citation>
    <scope>PROTEIN SEQUENCE OF 576-581</scope>
    <scope>SUBCELLULAR LOCATION</scope>
    <source>
        <strain>ATCC 201238 / W303-1B</strain>
    </source>
</reference>
<reference key="5">
    <citation type="journal article" date="2003" name="Nature">
        <title>Global analysis of protein expression in yeast.</title>
        <authorList>
            <person name="Ghaemmaghami S."/>
            <person name="Huh W.-K."/>
            <person name="Bower K."/>
            <person name="Howson R.W."/>
            <person name="Belle A."/>
            <person name="Dephoure N."/>
            <person name="O'Shea E.K."/>
            <person name="Weissman J.S."/>
        </authorList>
    </citation>
    <scope>LEVEL OF PROTEIN EXPRESSION [LARGE SCALE ANALYSIS]</scope>
</reference>
<evidence type="ECO:0000250" key="1">
    <source>
        <dbReference type="UniProtKB" id="Q5BEJ5"/>
    </source>
</evidence>
<evidence type="ECO:0000255" key="2">
    <source>
        <dbReference type="PROSITE-ProRule" id="PRU00718"/>
    </source>
</evidence>
<evidence type="ECO:0000269" key="3">
    <source>
    </source>
</evidence>
<evidence type="ECO:0000269" key="4">
    <source>
    </source>
</evidence>
<evidence type="ECO:0000269" key="5">
    <source>
    </source>
</evidence>
<evidence type="ECO:0000303" key="6">
    <source>
    </source>
</evidence>
<evidence type="ECO:0000305" key="7"/>
<gene>
    <name evidence="6" type="primary">DLD1</name>
    <name type="synonym">DLD</name>
    <name type="ordered locus">YDL174C</name>
</gene>
<protein>
    <recommendedName>
        <fullName evidence="6">D-lactate dehydrogenase [cytochrome] 1, mitochondrial</fullName>
        <ecNumber evidence="5">1.1.2.4</ecNumber>
    </recommendedName>
    <alternativeName>
        <fullName evidence="6">D-lactate ferricytochrome C oxidoreductase</fullName>
        <shortName evidence="6">D-LCR</shortName>
    </alternativeName>
</protein>
<name>DLD1_YEAST</name>
<proteinExistence type="evidence at protein level"/>
<accession>P32891</accession>
<accession>D6VRH8</accession>
<accession>Q12360</accession>
<dbReference type="EC" id="1.1.2.4" evidence="5"/>
<dbReference type="EMBL" id="X66052">
    <property type="protein sequence ID" value="CAA46852.1"/>
    <property type="molecule type" value="Genomic_DNA"/>
</dbReference>
<dbReference type="EMBL" id="Z67750">
    <property type="protein sequence ID" value="CAA91571.1"/>
    <property type="molecule type" value="Genomic_DNA"/>
</dbReference>
<dbReference type="EMBL" id="Z74222">
    <property type="protein sequence ID" value="CAA98748.1"/>
    <property type="molecule type" value="Genomic_DNA"/>
</dbReference>
<dbReference type="EMBL" id="BK006938">
    <property type="protein sequence ID" value="DAA11688.1"/>
    <property type="molecule type" value="Genomic_DNA"/>
</dbReference>
<dbReference type="PIR" id="S61038">
    <property type="entry name" value="S61038"/>
</dbReference>
<dbReference type="RefSeq" id="NP_010107.1">
    <property type="nucleotide sequence ID" value="NM_001180234.1"/>
</dbReference>
<dbReference type="SMR" id="P32891"/>
<dbReference type="BioGRID" id="31892">
    <property type="interactions" value="120"/>
</dbReference>
<dbReference type="FunCoup" id="P32891">
    <property type="interactions" value="267"/>
</dbReference>
<dbReference type="IntAct" id="P32891">
    <property type="interactions" value="46"/>
</dbReference>
<dbReference type="STRING" id="4932.YDL174C"/>
<dbReference type="PaxDb" id="4932-YDL174C"/>
<dbReference type="PeptideAtlas" id="P32891"/>
<dbReference type="PRIDE" id="P32891"/>
<dbReference type="EnsemblFungi" id="YDL174C_mRNA">
    <property type="protein sequence ID" value="YDL174C"/>
    <property type="gene ID" value="YDL174C"/>
</dbReference>
<dbReference type="GeneID" id="851380"/>
<dbReference type="KEGG" id="sce:YDL174C"/>
<dbReference type="AGR" id="SGD:S000002333"/>
<dbReference type="SGD" id="S000002333">
    <property type="gene designation" value="DLD1"/>
</dbReference>
<dbReference type="VEuPathDB" id="FungiDB:YDL174C"/>
<dbReference type="eggNOG" id="KOG1231">
    <property type="taxonomic scope" value="Eukaryota"/>
</dbReference>
<dbReference type="HOGENOM" id="CLU_017779_3_3_1"/>
<dbReference type="InParanoid" id="P32891"/>
<dbReference type="OMA" id="RACNAYS"/>
<dbReference type="OrthoDB" id="7786253at2759"/>
<dbReference type="BioCyc" id="MetaCyc:YDL174C-MONOMER"/>
<dbReference type="BioCyc" id="YEAST:YDL174C-MONOMER"/>
<dbReference type="Reactome" id="R-SCE-9837999">
    <property type="pathway name" value="Mitochondrial protein degradation"/>
</dbReference>
<dbReference type="BioGRID-ORCS" id="851380">
    <property type="hits" value="3 hits in 10 CRISPR screens"/>
</dbReference>
<dbReference type="PRO" id="PR:P32891"/>
<dbReference type="Proteomes" id="UP000002311">
    <property type="component" value="Chromosome IV"/>
</dbReference>
<dbReference type="RNAct" id="P32891">
    <property type="molecule type" value="protein"/>
</dbReference>
<dbReference type="GO" id="GO:0005743">
    <property type="term" value="C:mitochondrial inner membrane"/>
    <property type="evidence" value="ECO:0000314"/>
    <property type="project" value="SGD"/>
</dbReference>
<dbReference type="GO" id="GO:0005758">
    <property type="term" value="C:mitochondrial intermembrane space"/>
    <property type="evidence" value="ECO:0000304"/>
    <property type="project" value="Reactome"/>
</dbReference>
<dbReference type="GO" id="GO:0005739">
    <property type="term" value="C:mitochondrion"/>
    <property type="evidence" value="ECO:0000314"/>
    <property type="project" value="SGD"/>
</dbReference>
<dbReference type="GO" id="GO:0004458">
    <property type="term" value="F:D-lactate dehydrogenase (cytochrome) activity"/>
    <property type="evidence" value="ECO:0000315"/>
    <property type="project" value="SGD"/>
</dbReference>
<dbReference type="GO" id="GO:0008720">
    <property type="term" value="F:D-lactate dehydrogenase activity"/>
    <property type="evidence" value="ECO:0000318"/>
    <property type="project" value="GO_Central"/>
</dbReference>
<dbReference type="GO" id="GO:0071949">
    <property type="term" value="F:FAD binding"/>
    <property type="evidence" value="ECO:0007669"/>
    <property type="project" value="InterPro"/>
</dbReference>
<dbReference type="GO" id="GO:0050660">
    <property type="term" value="F:flavin adenine dinucleotide binding"/>
    <property type="evidence" value="ECO:0000318"/>
    <property type="project" value="GO_Central"/>
</dbReference>
<dbReference type="GO" id="GO:1903457">
    <property type="term" value="P:lactate catabolic process"/>
    <property type="evidence" value="ECO:0000315"/>
    <property type="project" value="SGD"/>
</dbReference>
<dbReference type="FunFam" id="3.30.465.10:FF:000038">
    <property type="entry name" value="D-lactate dehydrogenase"/>
    <property type="match status" value="1"/>
</dbReference>
<dbReference type="FunFam" id="1.10.45.10:FF:000001">
    <property type="entry name" value="D-lactate dehydrogenase mitochondrial"/>
    <property type="match status" value="1"/>
</dbReference>
<dbReference type="FunFam" id="3.30.70.2740:FF:000001">
    <property type="entry name" value="D-lactate dehydrogenase mitochondrial"/>
    <property type="match status" value="1"/>
</dbReference>
<dbReference type="Gene3D" id="3.30.465.10">
    <property type="match status" value="1"/>
</dbReference>
<dbReference type="Gene3D" id="3.30.70.2740">
    <property type="match status" value="1"/>
</dbReference>
<dbReference type="Gene3D" id="1.10.45.10">
    <property type="entry name" value="Vanillyl-alcohol Oxidase, Chain A, domain 4"/>
    <property type="match status" value="1"/>
</dbReference>
<dbReference type="InterPro" id="IPR004113">
    <property type="entry name" value="FAD-bd_oxidored_4_C"/>
</dbReference>
<dbReference type="InterPro" id="IPR016166">
    <property type="entry name" value="FAD-bd_PCMH"/>
</dbReference>
<dbReference type="InterPro" id="IPR036318">
    <property type="entry name" value="FAD-bd_PCMH-like_sf"/>
</dbReference>
<dbReference type="InterPro" id="IPR016169">
    <property type="entry name" value="FAD-bd_PCMH_sub2"/>
</dbReference>
<dbReference type="InterPro" id="IPR016164">
    <property type="entry name" value="FAD-linked_Oxase-like_C"/>
</dbReference>
<dbReference type="InterPro" id="IPR006094">
    <property type="entry name" value="Oxid_FAD_bind_N"/>
</dbReference>
<dbReference type="InterPro" id="IPR016171">
    <property type="entry name" value="Vanillyl_alc_oxidase_C-sub2"/>
</dbReference>
<dbReference type="PANTHER" id="PTHR11748">
    <property type="entry name" value="D-LACTATE DEHYDROGENASE"/>
    <property type="match status" value="1"/>
</dbReference>
<dbReference type="PANTHER" id="PTHR11748:SF111">
    <property type="entry name" value="D-LACTATE DEHYDROGENASE, MITOCHONDRIAL-RELATED"/>
    <property type="match status" value="1"/>
</dbReference>
<dbReference type="Pfam" id="PF02913">
    <property type="entry name" value="FAD-oxidase_C"/>
    <property type="match status" value="1"/>
</dbReference>
<dbReference type="Pfam" id="PF01565">
    <property type="entry name" value="FAD_binding_4"/>
    <property type="match status" value="1"/>
</dbReference>
<dbReference type="SUPFAM" id="SSF56176">
    <property type="entry name" value="FAD-binding/transporter-associated domain-like"/>
    <property type="match status" value="1"/>
</dbReference>
<dbReference type="SUPFAM" id="SSF55103">
    <property type="entry name" value="FAD-linked oxidases, C-terminal domain"/>
    <property type="match status" value="1"/>
</dbReference>
<dbReference type="PROSITE" id="PS51387">
    <property type="entry name" value="FAD_PCMH"/>
    <property type="match status" value="1"/>
</dbReference>
<feature type="transit peptide" description="Mitochondrion">
    <location>
        <begin position="1"/>
        <end status="unknown"/>
    </location>
</feature>
<feature type="chain" id="PRO_0000020428" description="D-lactate dehydrogenase [cytochrome] 1, mitochondrial">
    <location>
        <begin status="unknown"/>
        <end position="587"/>
    </location>
</feature>
<feature type="domain" description="FAD-binding PCMH-type" evidence="2">
    <location>
        <begin position="146"/>
        <end position="327"/>
    </location>
</feature>
<feature type="sequence conflict" description="In Ref. 1; CAA46852." evidence="7" ref="1">
    <original>A</original>
    <variation>RR</variation>
    <location>
        <position position="439"/>
    </location>
</feature>
<feature type="sequence conflict" description="In Ref. 1; CAA46852." evidence="7" ref="1">
    <original>DKIFKTDPNEPANDYR</original>
    <variation>GQNL</variation>
    <location>
        <begin position="572"/>
        <end position="587"/>
    </location>
</feature>
<keyword id="KW-0903">Direct protein sequencing</keyword>
<keyword id="KW-0274">FAD</keyword>
<keyword id="KW-0285">Flavoprotein</keyword>
<keyword id="KW-0472">Membrane</keyword>
<keyword id="KW-0496">Mitochondrion</keyword>
<keyword id="KW-0999">Mitochondrion inner membrane</keyword>
<keyword id="KW-0560">Oxidoreductase</keyword>
<keyword id="KW-1185">Reference proteome</keyword>
<keyword id="KW-0809">Transit peptide</keyword>